<dbReference type="EC" id="3.6.1.1" evidence="1"/>
<dbReference type="EMBL" id="AP006716">
    <property type="protein sequence ID" value="BAE04343.1"/>
    <property type="molecule type" value="Genomic_DNA"/>
</dbReference>
<dbReference type="RefSeq" id="WP_011275340.1">
    <property type="nucleotide sequence ID" value="NC_007168.1"/>
</dbReference>
<dbReference type="SMR" id="Q4L7N2"/>
<dbReference type="KEGG" id="sha:SH1034"/>
<dbReference type="eggNOG" id="COG1227">
    <property type="taxonomic scope" value="Bacteria"/>
</dbReference>
<dbReference type="HOGENOM" id="CLU_025243_0_1_9"/>
<dbReference type="OrthoDB" id="9766150at2"/>
<dbReference type="Proteomes" id="UP000000543">
    <property type="component" value="Chromosome"/>
</dbReference>
<dbReference type="GO" id="GO:0005737">
    <property type="term" value="C:cytoplasm"/>
    <property type="evidence" value="ECO:0007669"/>
    <property type="project" value="UniProtKB-SubCell"/>
</dbReference>
<dbReference type="GO" id="GO:0004427">
    <property type="term" value="F:inorganic diphosphate phosphatase activity"/>
    <property type="evidence" value="ECO:0007669"/>
    <property type="project" value="UniProtKB-UniRule"/>
</dbReference>
<dbReference type="GO" id="GO:0030145">
    <property type="term" value="F:manganese ion binding"/>
    <property type="evidence" value="ECO:0007669"/>
    <property type="project" value="UniProtKB-UniRule"/>
</dbReference>
<dbReference type="FunFam" id="3.10.310.20:FF:000001">
    <property type="entry name" value="Probable manganese-dependent inorganic pyrophosphatase"/>
    <property type="match status" value="1"/>
</dbReference>
<dbReference type="FunFam" id="3.90.1640.10:FF:000001">
    <property type="entry name" value="Probable manganese-dependent inorganic pyrophosphatase"/>
    <property type="match status" value="1"/>
</dbReference>
<dbReference type="Gene3D" id="3.10.310.20">
    <property type="entry name" value="DHHA2 domain"/>
    <property type="match status" value="1"/>
</dbReference>
<dbReference type="Gene3D" id="3.90.1640.10">
    <property type="entry name" value="inorganic pyrophosphatase (n-terminal core)"/>
    <property type="match status" value="1"/>
</dbReference>
<dbReference type="HAMAP" id="MF_00207">
    <property type="entry name" value="PPase_C"/>
    <property type="match status" value="1"/>
</dbReference>
<dbReference type="InterPro" id="IPR001667">
    <property type="entry name" value="DDH_dom"/>
</dbReference>
<dbReference type="InterPro" id="IPR038763">
    <property type="entry name" value="DHH_sf"/>
</dbReference>
<dbReference type="InterPro" id="IPR004097">
    <property type="entry name" value="DHHA2"/>
</dbReference>
<dbReference type="InterPro" id="IPR038222">
    <property type="entry name" value="DHHA2_dom_sf"/>
</dbReference>
<dbReference type="InterPro" id="IPR022934">
    <property type="entry name" value="Mn-dep_inorganic_PyrPase"/>
</dbReference>
<dbReference type="NCBIfam" id="NF003877">
    <property type="entry name" value="PRK05427.1"/>
    <property type="match status" value="1"/>
</dbReference>
<dbReference type="PANTHER" id="PTHR12112">
    <property type="entry name" value="BNIP - RELATED"/>
    <property type="match status" value="1"/>
</dbReference>
<dbReference type="PANTHER" id="PTHR12112:SF22">
    <property type="entry name" value="MANGANESE-DEPENDENT INORGANIC PYROPHOSPHATASE-RELATED"/>
    <property type="match status" value="1"/>
</dbReference>
<dbReference type="Pfam" id="PF01368">
    <property type="entry name" value="DHH"/>
    <property type="match status" value="1"/>
</dbReference>
<dbReference type="Pfam" id="PF02833">
    <property type="entry name" value="DHHA2"/>
    <property type="match status" value="1"/>
</dbReference>
<dbReference type="SMART" id="SM01131">
    <property type="entry name" value="DHHA2"/>
    <property type="match status" value="1"/>
</dbReference>
<dbReference type="SUPFAM" id="SSF64182">
    <property type="entry name" value="DHH phosphoesterases"/>
    <property type="match status" value="1"/>
</dbReference>
<accession>Q4L7N2</accession>
<feature type="chain" id="PRO_1000012322" description="Probable manganese-dependent inorganic pyrophosphatase">
    <location>
        <begin position="1"/>
        <end position="309"/>
    </location>
</feature>
<feature type="binding site" evidence="1">
    <location>
        <position position="9"/>
    </location>
    <ligand>
        <name>Mn(2+)</name>
        <dbReference type="ChEBI" id="CHEBI:29035"/>
        <label>1</label>
    </ligand>
</feature>
<feature type="binding site" evidence="1">
    <location>
        <position position="13"/>
    </location>
    <ligand>
        <name>Mn(2+)</name>
        <dbReference type="ChEBI" id="CHEBI:29035"/>
        <label>1</label>
    </ligand>
</feature>
<feature type="binding site" evidence="1">
    <location>
        <position position="15"/>
    </location>
    <ligand>
        <name>Mn(2+)</name>
        <dbReference type="ChEBI" id="CHEBI:29035"/>
        <label>2</label>
    </ligand>
</feature>
<feature type="binding site" evidence="1">
    <location>
        <position position="75"/>
    </location>
    <ligand>
        <name>Mn(2+)</name>
        <dbReference type="ChEBI" id="CHEBI:29035"/>
        <label>1</label>
    </ligand>
</feature>
<feature type="binding site" evidence="1">
    <location>
        <position position="75"/>
    </location>
    <ligand>
        <name>Mn(2+)</name>
        <dbReference type="ChEBI" id="CHEBI:29035"/>
        <label>2</label>
    </ligand>
</feature>
<feature type="binding site" evidence="1">
    <location>
        <position position="97"/>
    </location>
    <ligand>
        <name>Mn(2+)</name>
        <dbReference type="ChEBI" id="CHEBI:29035"/>
        <label>2</label>
    </ligand>
</feature>
<feature type="binding site" evidence="1">
    <location>
        <position position="149"/>
    </location>
    <ligand>
        <name>Mn(2+)</name>
        <dbReference type="ChEBI" id="CHEBI:29035"/>
        <label>2</label>
    </ligand>
</feature>
<reference key="1">
    <citation type="journal article" date="2005" name="J. Bacteriol.">
        <title>Whole-genome sequencing of Staphylococcus haemolyticus uncovers the extreme plasticity of its genome and the evolution of human-colonizing staphylococcal species.</title>
        <authorList>
            <person name="Takeuchi F."/>
            <person name="Watanabe S."/>
            <person name="Baba T."/>
            <person name="Yuzawa H."/>
            <person name="Ito T."/>
            <person name="Morimoto Y."/>
            <person name="Kuroda M."/>
            <person name="Cui L."/>
            <person name="Takahashi M."/>
            <person name="Ankai A."/>
            <person name="Baba S."/>
            <person name="Fukui S."/>
            <person name="Lee J.C."/>
            <person name="Hiramatsu K."/>
        </authorList>
    </citation>
    <scope>NUCLEOTIDE SEQUENCE [LARGE SCALE GENOMIC DNA]</scope>
    <source>
        <strain>JCSC1435</strain>
    </source>
</reference>
<organism>
    <name type="scientific">Staphylococcus haemolyticus (strain JCSC1435)</name>
    <dbReference type="NCBI Taxonomy" id="279808"/>
    <lineage>
        <taxon>Bacteria</taxon>
        <taxon>Bacillati</taxon>
        <taxon>Bacillota</taxon>
        <taxon>Bacilli</taxon>
        <taxon>Bacillales</taxon>
        <taxon>Staphylococcaceae</taxon>
        <taxon>Staphylococcus</taxon>
    </lineage>
</organism>
<protein>
    <recommendedName>
        <fullName evidence="1">Probable manganese-dependent inorganic pyrophosphatase</fullName>
        <ecNumber evidence="1">3.6.1.1</ecNumber>
    </recommendedName>
    <alternativeName>
        <fullName evidence="1">Pyrophosphate phospho-hydrolase</fullName>
        <shortName evidence="1">PPase</shortName>
    </alternativeName>
</protein>
<keyword id="KW-0963">Cytoplasm</keyword>
<keyword id="KW-0378">Hydrolase</keyword>
<keyword id="KW-0464">Manganese</keyword>
<keyword id="KW-0479">Metal-binding</keyword>
<evidence type="ECO:0000255" key="1">
    <source>
        <dbReference type="HAMAP-Rule" id="MF_00207"/>
    </source>
</evidence>
<name>PPAC_STAHJ</name>
<proteinExistence type="inferred from homology"/>
<sequence length="309" mass="34255">MAKTYIFGHQNPDTDAIASAIIMADFEQLTGNSEATPYRLGDINPETKFALDHFEVKAPELLSDNLDGREVILVDHNEFQQSAETISDAEIKHVVDHHRIANFETASPLWYRAEPVGCTATILYKMYKERGFEIKPHIAGLMISAIISDSLLFKSPTCTDEDVNAAKDLKDLANVDLDEYGLEMLKAGASTTDKSAEELLDMDAKSFNMGDYVTRIAQVNTVDIDEVLNRKEDLEKAMLETSANEKYDLFVLVVTDIINSDSKILVVGAEKDKVGEAFKVQLDDGMAFLSGVVSRKKQVVPQITDALIK</sequence>
<comment type="catalytic activity">
    <reaction evidence="1">
        <text>diphosphate + H2O = 2 phosphate + H(+)</text>
        <dbReference type="Rhea" id="RHEA:24576"/>
        <dbReference type="ChEBI" id="CHEBI:15377"/>
        <dbReference type="ChEBI" id="CHEBI:15378"/>
        <dbReference type="ChEBI" id="CHEBI:33019"/>
        <dbReference type="ChEBI" id="CHEBI:43474"/>
        <dbReference type="EC" id="3.6.1.1"/>
    </reaction>
</comment>
<comment type="cofactor">
    <cofactor evidence="1">
        <name>Mn(2+)</name>
        <dbReference type="ChEBI" id="CHEBI:29035"/>
    </cofactor>
    <text evidence="1">Binds 2 manganese ions per subunit.</text>
</comment>
<comment type="subcellular location">
    <subcellularLocation>
        <location evidence="1">Cytoplasm</location>
    </subcellularLocation>
</comment>
<comment type="similarity">
    <text evidence="1">Belongs to the PPase class C family.</text>
</comment>
<gene>
    <name evidence="1" type="primary">ppaC</name>
    <name type="ordered locus">SH1034</name>
</gene>